<accession>Q07756</accession>
<accession>A8INZ8</accession>
<name>NODI_AZOC5</name>
<sequence>MMLMRESPDDRHYTVSATGVWKKRGGIDVLRGLDMYVRRGERYGIMGTNGAGKSSLINIILGLTPPDRGTVTVFGKDMRRQGHLARARIGVVPQDDCLEQNMTPYENVMLYGRLCRMTASEARKRADQIFEKFSMMDCANRPVRLLSGGMRRLTMVARALVNDPYVIILDEATVGLDAKSRSALWQQIEASNATGATVLVISHLAEDLERMTDRIACICAGTVRAEWETAALLKALGALKILEIDHSVSPRGKELFCNHGLHVHENDGRLSAVHPSSDFALEAVLKKEAVPTTTRFATLDDIIRFPGFPWTGVGGVNGEK</sequence>
<evidence type="ECO:0000255" key="1">
    <source>
        <dbReference type="HAMAP-Rule" id="MF_01704"/>
    </source>
</evidence>
<comment type="function">
    <text evidence="1">Part of the ABC transporter complex NodIJ involved in the export of the nodulation factors (Nod factors), the bacterial signal molecules that induce symbiosis and subsequent nodulation induction. Nod factors are LCO (lipo-chitin oligosaccharide), a modified beta-1,4-linked N-acetylglucosamine oligosaccharide. This subunit is responsible for energy coupling to the transport system.</text>
</comment>
<comment type="subunit">
    <text evidence="1">The complex is composed of two ATP-binding proteins (NodI) and two transmembrane proteins (NodJ).</text>
</comment>
<comment type="subcellular location">
    <subcellularLocation>
        <location evidence="1">Cell inner membrane</location>
        <topology evidence="1">Peripheral membrane protein</topology>
    </subcellularLocation>
</comment>
<comment type="similarity">
    <text evidence="1">Belongs to the ABC transporter superfamily. Lipooligosaccharide exporter (TC 3.A.1.102) family.</text>
</comment>
<dbReference type="EC" id="7.6.2.-" evidence="1"/>
<dbReference type="EMBL" id="L18897">
    <property type="protein sequence ID" value="AAB51167.1"/>
    <property type="molecule type" value="Genomic_DNA"/>
</dbReference>
<dbReference type="EMBL" id="AP009384">
    <property type="protein sequence ID" value="BAF89811.1"/>
    <property type="molecule type" value="Genomic_DNA"/>
</dbReference>
<dbReference type="PIR" id="S35007">
    <property type="entry name" value="S35007"/>
</dbReference>
<dbReference type="SMR" id="Q07756"/>
<dbReference type="STRING" id="438753.AZC_3813"/>
<dbReference type="TCDB" id="3.A.1.102.2">
    <property type="family name" value="the atp-binding cassette (abc) superfamily"/>
</dbReference>
<dbReference type="KEGG" id="azc:AZC_3813"/>
<dbReference type="eggNOG" id="COG1131">
    <property type="taxonomic scope" value="Bacteria"/>
</dbReference>
<dbReference type="HOGENOM" id="CLU_000604_1_2_5"/>
<dbReference type="Proteomes" id="UP000000270">
    <property type="component" value="Chromosome"/>
</dbReference>
<dbReference type="GO" id="GO:0005886">
    <property type="term" value="C:plasma membrane"/>
    <property type="evidence" value="ECO:0007669"/>
    <property type="project" value="UniProtKB-SubCell"/>
</dbReference>
<dbReference type="GO" id="GO:0005524">
    <property type="term" value="F:ATP binding"/>
    <property type="evidence" value="ECO:0007669"/>
    <property type="project" value="UniProtKB-KW"/>
</dbReference>
<dbReference type="GO" id="GO:0016887">
    <property type="term" value="F:ATP hydrolysis activity"/>
    <property type="evidence" value="ECO:0007669"/>
    <property type="project" value="InterPro"/>
</dbReference>
<dbReference type="CDD" id="cd03230">
    <property type="entry name" value="ABC_DR_subfamily_A"/>
    <property type="match status" value="1"/>
</dbReference>
<dbReference type="Gene3D" id="3.40.50.300">
    <property type="entry name" value="P-loop containing nucleotide triphosphate hydrolases"/>
    <property type="match status" value="1"/>
</dbReference>
<dbReference type="InterPro" id="IPR003593">
    <property type="entry name" value="AAA+_ATPase"/>
</dbReference>
<dbReference type="InterPro" id="IPR003439">
    <property type="entry name" value="ABC_transporter-like_ATP-bd"/>
</dbReference>
<dbReference type="InterPro" id="IPR050763">
    <property type="entry name" value="ABC_transporter_ATP-binding"/>
</dbReference>
<dbReference type="InterPro" id="IPR027417">
    <property type="entry name" value="P-loop_NTPase"/>
</dbReference>
<dbReference type="PANTHER" id="PTHR42711">
    <property type="entry name" value="ABC TRANSPORTER ATP-BINDING PROTEIN"/>
    <property type="match status" value="1"/>
</dbReference>
<dbReference type="PANTHER" id="PTHR42711:SF5">
    <property type="entry name" value="ABC TRANSPORTER ATP-BINDING PROTEIN NATA"/>
    <property type="match status" value="1"/>
</dbReference>
<dbReference type="Pfam" id="PF00005">
    <property type="entry name" value="ABC_tran"/>
    <property type="match status" value="1"/>
</dbReference>
<dbReference type="SMART" id="SM00382">
    <property type="entry name" value="AAA"/>
    <property type="match status" value="1"/>
</dbReference>
<dbReference type="SUPFAM" id="SSF52540">
    <property type="entry name" value="P-loop containing nucleoside triphosphate hydrolases"/>
    <property type="match status" value="1"/>
</dbReference>
<dbReference type="PROSITE" id="PS50893">
    <property type="entry name" value="ABC_TRANSPORTER_2"/>
    <property type="match status" value="1"/>
</dbReference>
<dbReference type="PROSITE" id="PS51240">
    <property type="entry name" value="NODI"/>
    <property type="match status" value="1"/>
</dbReference>
<reference key="1">
    <citation type="journal article" date="1993" name="Mol. Microbiol.">
        <title>Identification of nodSUIJ genes in Nod locus 1 of Azorhizobium caulinodans: evidence that nodS encodes a methyltransferase involved in Nod factor modification.</title>
        <authorList>
            <person name="Geelen D."/>
            <person name="Mergaert P."/>
            <person name="Geremia R.A."/>
            <person name="Goormachtig S."/>
            <person name="van Montagu M."/>
            <person name="Holsters M."/>
        </authorList>
    </citation>
    <scope>NUCLEOTIDE SEQUENCE [GENOMIC DNA]</scope>
</reference>
<reference key="2">
    <citation type="submission" date="2007-04" db="EMBL/GenBank/DDBJ databases">
        <title>Complete genome sequence of the nitrogen-fixing bacterium Azorhizobium caulinodans ORS571.</title>
        <authorList>
            <person name="Lee K.B."/>
            <person name="Backer P.D."/>
            <person name="Aono T."/>
            <person name="Liu C.T."/>
            <person name="Suzuki S."/>
            <person name="Suzuki T."/>
            <person name="Kaneko T."/>
            <person name="Yamada M."/>
            <person name="Tabata S."/>
            <person name="Kupfer D.M."/>
            <person name="Najar F.Z."/>
            <person name="Wiley G.B."/>
            <person name="Roe B."/>
            <person name="Binnewies T."/>
            <person name="Ussery D."/>
            <person name="Vereecke D."/>
            <person name="Gevers D."/>
            <person name="Holsters M."/>
            <person name="Oyaizu H."/>
        </authorList>
    </citation>
    <scope>NUCLEOTIDE SEQUENCE [LARGE SCALE GENOMIC DNA]</scope>
    <source>
        <strain>ATCC 43989 / DSM 5975 / JCM 20966 / LMG 6465 / NBRC 14845 / NCIMB 13405 / ORS 571</strain>
    </source>
</reference>
<proteinExistence type="inferred from homology"/>
<gene>
    <name evidence="1" type="primary">nodI</name>
    <name type="ordered locus">AZC_3813</name>
</gene>
<feature type="chain" id="PRO_0000092634" description="Nod factor export ATP-binding protein I">
    <location>
        <begin position="1"/>
        <end position="320"/>
    </location>
</feature>
<feature type="domain" description="ABC transporter" evidence="1">
    <location>
        <begin position="15"/>
        <end position="245"/>
    </location>
</feature>
<feature type="binding site" evidence="1">
    <location>
        <begin position="47"/>
        <end position="54"/>
    </location>
    <ligand>
        <name>ATP</name>
        <dbReference type="ChEBI" id="CHEBI:30616"/>
    </ligand>
</feature>
<protein>
    <recommendedName>
        <fullName evidence="1">Nod factor export ATP-binding protein I</fullName>
        <ecNumber evidence="1">7.6.2.-</ecNumber>
    </recommendedName>
    <alternativeName>
        <fullName evidence="1">Nodulation ATP-binding protein I</fullName>
    </alternativeName>
</protein>
<keyword id="KW-0067">ATP-binding</keyword>
<keyword id="KW-0997">Cell inner membrane</keyword>
<keyword id="KW-1003">Cell membrane</keyword>
<keyword id="KW-0472">Membrane</keyword>
<keyword id="KW-0536">Nodulation</keyword>
<keyword id="KW-0547">Nucleotide-binding</keyword>
<keyword id="KW-1185">Reference proteome</keyword>
<keyword id="KW-1278">Translocase</keyword>
<keyword id="KW-0813">Transport</keyword>
<organism>
    <name type="scientific">Azorhizobium caulinodans (strain ATCC 43989 / DSM 5975 / JCM 20966 / LMG 6465 / NBRC 14845 / NCIMB 13405 / ORS 571)</name>
    <dbReference type="NCBI Taxonomy" id="438753"/>
    <lineage>
        <taxon>Bacteria</taxon>
        <taxon>Pseudomonadati</taxon>
        <taxon>Pseudomonadota</taxon>
        <taxon>Alphaproteobacteria</taxon>
        <taxon>Hyphomicrobiales</taxon>
        <taxon>Xanthobacteraceae</taxon>
        <taxon>Azorhizobium</taxon>
    </lineage>
</organism>